<accession>Q11DS9</accession>
<feature type="chain" id="PRO_1000007275" description="Large ribosomal subunit protein bL28">
    <location>
        <begin position="1"/>
        <end position="98"/>
    </location>
</feature>
<comment type="similarity">
    <text evidence="1">Belongs to the bacterial ribosomal protein bL28 family.</text>
</comment>
<name>RL28_CHESB</name>
<keyword id="KW-0687">Ribonucleoprotein</keyword>
<keyword id="KW-0689">Ribosomal protein</keyword>
<gene>
    <name evidence="1" type="primary">rpmB</name>
    <name type="ordered locus">Meso_3074</name>
</gene>
<protein>
    <recommendedName>
        <fullName evidence="1">Large ribosomal subunit protein bL28</fullName>
    </recommendedName>
    <alternativeName>
        <fullName evidence="2">50S ribosomal protein L28</fullName>
    </alternativeName>
</protein>
<organism>
    <name type="scientific">Chelativorans sp. (strain BNC1)</name>
    <dbReference type="NCBI Taxonomy" id="266779"/>
    <lineage>
        <taxon>Bacteria</taxon>
        <taxon>Pseudomonadati</taxon>
        <taxon>Pseudomonadota</taxon>
        <taxon>Alphaproteobacteria</taxon>
        <taxon>Hyphomicrobiales</taxon>
        <taxon>Phyllobacteriaceae</taxon>
        <taxon>Chelativorans</taxon>
    </lineage>
</organism>
<proteinExistence type="inferred from homology"/>
<evidence type="ECO:0000255" key="1">
    <source>
        <dbReference type="HAMAP-Rule" id="MF_00373"/>
    </source>
</evidence>
<evidence type="ECO:0000305" key="2"/>
<dbReference type="EMBL" id="CP000390">
    <property type="protein sequence ID" value="ABG64446.1"/>
    <property type="molecule type" value="Genomic_DNA"/>
</dbReference>
<dbReference type="SMR" id="Q11DS9"/>
<dbReference type="STRING" id="266779.Meso_3074"/>
<dbReference type="KEGG" id="mes:Meso_3074"/>
<dbReference type="eggNOG" id="COG0227">
    <property type="taxonomic scope" value="Bacteria"/>
</dbReference>
<dbReference type="HOGENOM" id="CLU_064548_4_2_5"/>
<dbReference type="OrthoDB" id="9805609at2"/>
<dbReference type="GO" id="GO:0022625">
    <property type="term" value="C:cytosolic large ribosomal subunit"/>
    <property type="evidence" value="ECO:0007669"/>
    <property type="project" value="TreeGrafter"/>
</dbReference>
<dbReference type="GO" id="GO:0003735">
    <property type="term" value="F:structural constituent of ribosome"/>
    <property type="evidence" value="ECO:0007669"/>
    <property type="project" value="InterPro"/>
</dbReference>
<dbReference type="GO" id="GO:0006412">
    <property type="term" value="P:translation"/>
    <property type="evidence" value="ECO:0007669"/>
    <property type="project" value="UniProtKB-UniRule"/>
</dbReference>
<dbReference type="Gene3D" id="2.30.170.40">
    <property type="entry name" value="Ribosomal protein L28/L24"/>
    <property type="match status" value="1"/>
</dbReference>
<dbReference type="HAMAP" id="MF_00373">
    <property type="entry name" value="Ribosomal_bL28"/>
    <property type="match status" value="1"/>
</dbReference>
<dbReference type="InterPro" id="IPR026569">
    <property type="entry name" value="Ribosomal_bL28"/>
</dbReference>
<dbReference type="InterPro" id="IPR034704">
    <property type="entry name" value="Ribosomal_bL28/bL31-like_sf"/>
</dbReference>
<dbReference type="InterPro" id="IPR001383">
    <property type="entry name" value="Ribosomal_bL28_bact-type"/>
</dbReference>
<dbReference type="InterPro" id="IPR037147">
    <property type="entry name" value="Ribosomal_bL28_sf"/>
</dbReference>
<dbReference type="NCBIfam" id="TIGR00009">
    <property type="entry name" value="L28"/>
    <property type="match status" value="1"/>
</dbReference>
<dbReference type="PANTHER" id="PTHR13528">
    <property type="entry name" value="39S RIBOSOMAL PROTEIN L28, MITOCHONDRIAL"/>
    <property type="match status" value="1"/>
</dbReference>
<dbReference type="PANTHER" id="PTHR13528:SF2">
    <property type="entry name" value="LARGE RIBOSOMAL SUBUNIT PROTEIN BL28M"/>
    <property type="match status" value="1"/>
</dbReference>
<dbReference type="Pfam" id="PF00830">
    <property type="entry name" value="Ribosomal_L28"/>
    <property type="match status" value="1"/>
</dbReference>
<dbReference type="SUPFAM" id="SSF143800">
    <property type="entry name" value="L28p-like"/>
    <property type="match status" value="1"/>
</dbReference>
<reference key="1">
    <citation type="submission" date="2006-06" db="EMBL/GenBank/DDBJ databases">
        <title>Complete sequence of chromosome of Mesorhizobium sp. BNC1.</title>
        <authorList>
            <consortium name="US DOE Joint Genome Institute"/>
            <person name="Copeland A."/>
            <person name="Lucas S."/>
            <person name="Lapidus A."/>
            <person name="Barry K."/>
            <person name="Detter J.C."/>
            <person name="Glavina del Rio T."/>
            <person name="Hammon N."/>
            <person name="Israni S."/>
            <person name="Dalin E."/>
            <person name="Tice H."/>
            <person name="Pitluck S."/>
            <person name="Chertkov O."/>
            <person name="Brettin T."/>
            <person name="Bruce D."/>
            <person name="Han C."/>
            <person name="Tapia R."/>
            <person name="Gilna P."/>
            <person name="Schmutz J."/>
            <person name="Larimer F."/>
            <person name="Land M."/>
            <person name="Hauser L."/>
            <person name="Kyrpides N."/>
            <person name="Mikhailova N."/>
            <person name="Richardson P."/>
        </authorList>
    </citation>
    <scope>NUCLEOTIDE SEQUENCE [LARGE SCALE GENOMIC DNA]</scope>
    <source>
        <strain>BNC1</strain>
    </source>
</reference>
<sequence length="98" mass="10886">MSRACELTGKAVMSGNNVSHANNKTRRRFLPNLCDVTLMSEALGQSYRLRVSANALRSVEHRGGLDAFLLKAKSNELSQRARLLKKQVAKKLTEQTEA</sequence>